<proteinExistence type="inferred from homology"/>
<accession>C5C7X4</accession>
<keyword id="KW-0067">ATP-binding</keyword>
<keyword id="KW-0963">Cytoplasm</keyword>
<keyword id="KW-0235">DNA replication</keyword>
<keyword id="KW-0238">DNA-binding</keyword>
<keyword id="KW-0446">Lipid-binding</keyword>
<keyword id="KW-0547">Nucleotide-binding</keyword>
<keyword id="KW-1185">Reference proteome</keyword>
<reference key="1">
    <citation type="journal article" date="2010" name="J. Bacteriol.">
        <title>Genome sequence of the Fleming strain of Micrococcus luteus, a simple free-living actinobacterium.</title>
        <authorList>
            <person name="Young M."/>
            <person name="Artsatbanov V."/>
            <person name="Beller H.R."/>
            <person name="Chandra G."/>
            <person name="Chater K.F."/>
            <person name="Dover L.G."/>
            <person name="Goh E.B."/>
            <person name="Kahan T."/>
            <person name="Kaprelyants A.S."/>
            <person name="Kyrpides N."/>
            <person name="Lapidus A."/>
            <person name="Lowry S.R."/>
            <person name="Lykidis A."/>
            <person name="Mahillon J."/>
            <person name="Markowitz V."/>
            <person name="Mavromatis K."/>
            <person name="Mukamolova G.V."/>
            <person name="Oren A."/>
            <person name="Rokem J.S."/>
            <person name="Smith M.C."/>
            <person name="Young D.I."/>
            <person name="Greenblatt C.L."/>
        </authorList>
    </citation>
    <scope>NUCLEOTIDE SEQUENCE [LARGE SCALE GENOMIC DNA]</scope>
    <source>
        <strain>ATCC 4698 / DSM 20030 / JCM 1464 / CCM 169 / CCUG 5858 / IAM 1056 / NBRC 3333 / NCIMB 9278 / NCTC 2665 / VKM Ac-2230</strain>
    </source>
</reference>
<organism>
    <name type="scientific">Micrococcus luteus (strain ATCC 4698 / DSM 20030 / JCM 1464 / CCM 169 / CCUG 5858 / IAM 1056 / NBRC 3333 / NCIMB 9278 / NCTC 2665 / VKM Ac-2230)</name>
    <name type="common">Micrococcus lysodeikticus</name>
    <dbReference type="NCBI Taxonomy" id="465515"/>
    <lineage>
        <taxon>Bacteria</taxon>
        <taxon>Bacillati</taxon>
        <taxon>Actinomycetota</taxon>
        <taxon>Actinomycetes</taxon>
        <taxon>Micrococcales</taxon>
        <taxon>Micrococcaceae</taxon>
        <taxon>Micrococcus</taxon>
    </lineage>
</organism>
<protein>
    <recommendedName>
        <fullName evidence="1">Chromosomal replication initiator protein DnaA</fullName>
    </recommendedName>
</protein>
<dbReference type="EMBL" id="CP001628">
    <property type="protein sequence ID" value="ACS29576.1"/>
    <property type="molecule type" value="Genomic_DNA"/>
</dbReference>
<dbReference type="RefSeq" id="WP_012750665.1">
    <property type="nucleotide sequence ID" value="NC_012803.1"/>
</dbReference>
<dbReference type="SMR" id="C5C7X4"/>
<dbReference type="STRING" id="465515.Mlut_00010"/>
<dbReference type="EnsemblBacteria" id="ACS29576">
    <property type="protein sequence ID" value="ACS29576"/>
    <property type="gene ID" value="Mlut_00010"/>
</dbReference>
<dbReference type="GeneID" id="93344190"/>
<dbReference type="KEGG" id="mlu:Mlut_00010"/>
<dbReference type="eggNOG" id="COG0593">
    <property type="taxonomic scope" value="Bacteria"/>
</dbReference>
<dbReference type="HOGENOM" id="CLU_026910_2_0_11"/>
<dbReference type="Proteomes" id="UP000000738">
    <property type="component" value="Chromosome"/>
</dbReference>
<dbReference type="GO" id="GO:0005737">
    <property type="term" value="C:cytoplasm"/>
    <property type="evidence" value="ECO:0007669"/>
    <property type="project" value="UniProtKB-SubCell"/>
</dbReference>
<dbReference type="GO" id="GO:0005886">
    <property type="term" value="C:plasma membrane"/>
    <property type="evidence" value="ECO:0007669"/>
    <property type="project" value="TreeGrafter"/>
</dbReference>
<dbReference type="GO" id="GO:0005524">
    <property type="term" value="F:ATP binding"/>
    <property type="evidence" value="ECO:0007669"/>
    <property type="project" value="UniProtKB-UniRule"/>
</dbReference>
<dbReference type="GO" id="GO:0016887">
    <property type="term" value="F:ATP hydrolysis activity"/>
    <property type="evidence" value="ECO:0007669"/>
    <property type="project" value="InterPro"/>
</dbReference>
<dbReference type="GO" id="GO:0003688">
    <property type="term" value="F:DNA replication origin binding"/>
    <property type="evidence" value="ECO:0007669"/>
    <property type="project" value="UniProtKB-UniRule"/>
</dbReference>
<dbReference type="GO" id="GO:0008289">
    <property type="term" value="F:lipid binding"/>
    <property type="evidence" value="ECO:0007669"/>
    <property type="project" value="UniProtKB-KW"/>
</dbReference>
<dbReference type="GO" id="GO:0006270">
    <property type="term" value="P:DNA replication initiation"/>
    <property type="evidence" value="ECO:0007669"/>
    <property type="project" value="UniProtKB-UniRule"/>
</dbReference>
<dbReference type="GO" id="GO:0006275">
    <property type="term" value="P:regulation of DNA replication"/>
    <property type="evidence" value="ECO:0007669"/>
    <property type="project" value="UniProtKB-UniRule"/>
</dbReference>
<dbReference type="CDD" id="cd00009">
    <property type="entry name" value="AAA"/>
    <property type="match status" value="1"/>
</dbReference>
<dbReference type="CDD" id="cd06571">
    <property type="entry name" value="Bac_DnaA_C"/>
    <property type="match status" value="1"/>
</dbReference>
<dbReference type="FunFam" id="1.10.1750.10:FF:000002">
    <property type="entry name" value="Chromosomal replication initiator protein DnaA"/>
    <property type="match status" value="1"/>
</dbReference>
<dbReference type="FunFam" id="1.10.8.60:FF:000003">
    <property type="entry name" value="Chromosomal replication initiator protein DnaA"/>
    <property type="match status" value="1"/>
</dbReference>
<dbReference type="FunFam" id="3.40.50.300:FF:000150">
    <property type="entry name" value="Chromosomal replication initiator protein DnaA"/>
    <property type="match status" value="1"/>
</dbReference>
<dbReference type="Gene3D" id="1.10.1750.10">
    <property type="match status" value="1"/>
</dbReference>
<dbReference type="Gene3D" id="1.10.8.60">
    <property type="match status" value="1"/>
</dbReference>
<dbReference type="Gene3D" id="3.40.50.300">
    <property type="entry name" value="P-loop containing nucleotide triphosphate hydrolases"/>
    <property type="match status" value="1"/>
</dbReference>
<dbReference type="HAMAP" id="MF_00377">
    <property type="entry name" value="DnaA_bact"/>
    <property type="match status" value="1"/>
</dbReference>
<dbReference type="InterPro" id="IPR003593">
    <property type="entry name" value="AAA+_ATPase"/>
</dbReference>
<dbReference type="InterPro" id="IPR001957">
    <property type="entry name" value="Chromosome_initiator_DnaA"/>
</dbReference>
<dbReference type="InterPro" id="IPR020591">
    <property type="entry name" value="Chromosome_initiator_DnaA-like"/>
</dbReference>
<dbReference type="InterPro" id="IPR018312">
    <property type="entry name" value="Chromosome_initiator_DnaA_CS"/>
</dbReference>
<dbReference type="InterPro" id="IPR013159">
    <property type="entry name" value="DnaA_C"/>
</dbReference>
<dbReference type="InterPro" id="IPR013317">
    <property type="entry name" value="DnaA_dom"/>
</dbReference>
<dbReference type="InterPro" id="IPR027417">
    <property type="entry name" value="P-loop_NTPase"/>
</dbReference>
<dbReference type="InterPro" id="IPR010921">
    <property type="entry name" value="Trp_repressor/repl_initiator"/>
</dbReference>
<dbReference type="NCBIfam" id="TIGR00362">
    <property type="entry name" value="DnaA"/>
    <property type="match status" value="1"/>
</dbReference>
<dbReference type="NCBIfam" id="NF010686">
    <property type="entry name" value="PRK14086.1"/>
    <property type="match status" value="1"/>
</dbReference>
<dbReference type="PANTHER" id="PTHR30050">
    <property type="entry name" value="CHROMOSOMAL REPLICATION INITIATOR PROTEIN DNAA"/>
    <property type="match status" value="1"/>
</dbReference>
<dbReference type="PANTHER" id="PTHR30050:SF2">
    <property type="entry name" value="CHROMOSOMAL REPLICATION INITIATOR PROTEIN DNAA"/>
    <property type="match status" value="1"/>
</dbReference>
<dbReference type="Pfam" id="PF00308">
    <property type="entry name" value="Bac_DnaA"/>
    <property type="match status" value="1"/>
</dbReference>
<dbReference type="Pfam" id="PF08299">
    <property type="entry name" value="Bac_DnaA_C"/>
    <property type="match status" value="1"/>
</dbReference>
<dbReference type="PRINTS" id="PR00051">
    <property type="entry name" value="DNAA"/>
</dbReference>
<dbReference type="SMART" id="SM00382">
    <property type="entry name" value="AAA"/>
    <property type="match status" value="1"/>
</dbReference>
<dbReference type="SMART" id="SM00760">
    <property type="entry name" value="Bac_DnaA_C"/>
    <property type="match status" value="1"/>
</dbReference>
<dbReference type="SUPFAM" id="SSF52540">
    <property type="entry name" value="P-loop containing nucleoside triphosphate hydrolases"/>
    <property type="match status" value="1"/>
</dbReference>
<dbReference type="SUPFAM" id="SSF48295">
    <property type="entry name" value="TrpR-like"/>
    <property type="match status" value="1"/>
</dbReference>
<dbReference type="PROSITE" id="PS01008">
    <property type="entry name" value="DNAA"/>
    <property type="match status" value="1"/>
</dbReference>
<comment type="function">
    <text evidence="1">Plays an essential role in the initiation and regulation of chromosomal replication. ATP-DnaA binds to the origin of replication (oriC) to initiate formation of the DNA replication initiation complex once per cell cycle. Binds the DnaA box (a 9 base pair repeat at the origin) and separates the double-stranded (ds)DNA. Forms a right-handed helical filament on oriC DNA; dsDNA binds to the exterior of the filament while single-stranded (ss)DNA is stabiized in the filament's interior. The ATP-DnaA-oriC complex binds and stabilizes one strand of the AT-rich DNA unwinding element (DUE), permitting loading of DNA polymerase. After initiation quickly degrades to an ADP-DnaA complex that is not apt for DNA replication. Binds acidic phospholipids.</text>
</comment>
<comment type="subunit">
    <text evidence="1">Oligomerizes as a right-handed, spiral filament on DNA at oriC.</text>
</comment>
<comment type="subcellular location">
    <subcellularLocation>
        <location evidence="1">Cytoplasm</location>
    </subcellularLocation>
</comment>
<comment type="domain">
    <text evidence="1">Domain I is involved in oligomerization and binding regulators, domain II is flexibile and of varying length in different bacteria, domain III forms the AAA+ region, while domain IV binds dsDNA.</text>
</comment>
<comment type="similarity">
    <text evidence="1">Belongs to the DnaA family.</text>
</comment>
<evidence type="ECO:0000255" key="1">
    <source>
        <dbReference type="HAMAP-Rule" id="MF_00377"/>
    </source>
</evidence>
<evidence type="ECO:0000256" key="2">
    <source>
        <dbReference type="SAM" id="MobiDB-lite"/>
    </source>
</evidence>
<gene>
    <name evidence="1" type="primary">dnaA</name>
    <name type="ordered locus">Mlut_00010</name>
</gene>
<name>DNAA_MICLC</name>
<sequence>MVADQAVLSSWRSVVGSLEDDARVSARLMGFVYLAQPQGLIGNTLLLAVPNETTRETLQGTQVADALTDALTQEFREEILLAISIDANLQPPRTPSSEARRSSLAGGPSGAAAPDVELPPAATAATSRRAVAEELPGFRIEPPADVVPAANAAPNGNGKPTPAPPSTSAETSRLNDRYHFETFVIGSSNRFAHAAANAVAEAPAKAYNPLFIYGESGLGKTHLLHAIGHYARRLYPGLRVRYVNSEEFTNDFINSIRHDEGASFKQVYRNVDILLIDDIQFLADKEATVEEFFHTFNTLYNNNKQVVITSDLPPKQLSGFEDRLRSRFEWGLITDIQPPDLETRIAILRKKAEAEGLVAPPEALEYIASRISTNIRELEGALIRVTAFASLNRQTVDIELAEHVLKDLITDETAHEITPELILHATGEYFNLTLEELTSKSRTRTLVTARQIAMYLLRELTEMSLPKIGQVLGGRDHTTVIHADRKIRELMAERRTIYNQVTELTNEIKRKQRGA</sequence>
<feature type="chain" id="PRO_1000205657" description="Chromosomal replication initiator protein DnaA">
    <location>
        <begin position="1"/>
        <end position="515"/>
    </location>
</feature>
<feature type="region of interest" description="Domain I, interacts with DnaA modulators" evidence="1">
    <location>
        <begin position="1"/>
        <end position="89"/>
    </location>
</feature>
<feature type="region of interest" description="Domain II" evidence="1">
    <location>
        <begin position="89"/>
        <end position="172"/>
    </location>
</feature>
<feature type="region of interest" description="Disordered" evidence="2">
    <location>
        <begin position="90"/>
        <end position="130"/>
    </location>
</feature>
<feature type="region of interest" description="Disordered" evidence="2">
    <location>
        <begin position="142"/>
        <end position="171"/>
    </location>
</feature>
<feature type="region of interest" description="Domain III, AAA+ region" evidence="1">
    <location>
        <begin position="173"/>
        <end position="389"/>
    </location>
</feature>
<feature type="region of interest" description="Domain IV, binds dsDNA" evidence="1">
    <location>
        <begin position="390"/>
        <end position="515"/>
    </location>
</feature>
<feature type="compositionally biased region" description="Low complexity" evidence="2">
    <location>
        <begin position="102"/>
        <end position="114"/>
    </location>
</feature>
<feature type="compositionally biased region" description="Low complexity" evidence="2">
    <location>
        <begin position="143"/>
        <end position="160"/>
    </location>
</feature>
<feature type="binding site" evidence="1">
    <location>
        <position position="217"/>
    </location>
    <ligand>
        <name>ATP</name>
        <dbReference type="ChEBI" id="CHEBI:30616"/>
    </ligand>
</feature>
<feature type="binding site" evidence="1">
    <location>
        <position position="219"/>
    </location>
    <ligand>
        <name>ATP</name>
        <dbReference type="ChEBI" id="CHEBI:30616"/>
    </ligand>
</feature>
<feature type="binding site" evidence="1">
    <location>
        <position position="220"/>
    </location>
    <ligand>
        <name>ATP</name>
        <dbReference type="ChEBI" id="CHEBI:30616"/>
    </ligand>
</feature>
<feature type="binding site" evidence="1">
    <location>
        <position position="221"/>
    </location>
    <ligand>
        <name>ATP</name>
        <dbReference type="ChEBI" id="CHEBI:30616"/>
    </ligand>
</feature>